<gene>
    <name evidence="3" type="primary">UGT71A15</name>
</gene>
<feature type="chain" id="PRO_0000434457" description="UDP-glycosyltransferase 71A15">
    <location>
        <begin position="1"/>
        <end position="471"/>
    </location>
</feature>
<feature type="binding site" evidence="1">
    <location>
        <position position="282"/>
    </location>
    <ligand>
        <name>UDP-alpha-D-glucose</name>
        <dbReference type="ChEBI" id="CHEBI:58885"/>
    </ligand>
</feature>
<feature type="binding site" evidence="1">
    <location>
        <begin position="348"/>
        <end position="349"/>
    </location>
    <ligand>
        <name>UDP-alpha-D-glucose</name>
        <dbReference type="ChEBI" id="CHEBI:58885"/>
    </ligand>
</feature>
<feature type="binding site" evidence="1">
    <location>
        <begin position="366"/>
        <end position="374"/>
    </location>
    <ligand>
        <name>UDP-alpha-D-glucose</name>
        <dbReference type="ChEBI" id="CHEBI:58885"/>
    </ligand>
</feature>
<feature type="binding site" evidence="1">
    <location>
        <begin position="388"/>
        <end position="391"/>
    </location>
    <ligand>
        <name>UDP-alpha-D-glucose</name>
        <dbReference type="ChEBI" id="CHEBI:58885"/>
    </ligand>
</feature>
<proteinExistence type="evidence at protein level"/>
<sequence>MKRPAQLVFVPAPGIGHIVSTVEMAKQLAARDDQLFITVLVMKLPYAQPFTNTDSSISHRINFVNLPEAQPDKQDIVPNPGSFFRMFVENHKSHVRDAVINVLPESDQSESTSKPRLAGFVLDMFSASLIDVANEFKVPSYLFFTSNASALALMSHFQSLRDEGGIDITELTSSTAELAVPSFINPYPAAVLPGSLLDMESTKSTLNHVSKYKQTKGILVNTFMELESHALHYLDSGDKIPPVYPVGPLLNLKSSDEDKASDILRWLDDQPPFSVVFLCFGSMGSFGEAQVKEIACALEHSGHRFLWSLRRPPPQGKRAMPSDYEDLKTVLPEGFLDRTATVGKVIGWAPQAAILGHPATGGFVSHCGWNSTLESLWNGVPIAAWPLYAEQNLNAFQLVVELGLAVEIKMDYRRDSDVVVSAEDIERGIRRVMELDSDVRKRVKEMSEKSKKALVDGGSSYSSLGRFIDKI</sequence>
<organism>
    <name type="scientific">Malus domestica</name>
    <name type="common">Apple</name>
    <name type="synonym">Pyrus malus</name>
    <dbReference type="NCBI Taxonomy" id="3750"/>
    <lineage>
        <taxon>Eukaryota</taxon>
        <taxon>Viridiplantae</taxon>
        <taxon>Streptophyta</taxon>
        <taxon>Embryophyta</taxon>
        <taxon>Tracheophyta</taxon>
        <taxon>Spermatophyta</taxon>
        <taxon>Magnoliopsida</taxon>
        <taxon>eudicotyledons</taxon>
        <taxon>Gunneridae</taxon>
        <taxon>Pentapetalae</taxon>
        <taxon>rosids</taxon>
        <taxon>fabids</taxon>
        <taxon>Rosales</taxon>
        <taxon>Rosaceae</taxon>
        <taxon>Amygdaloideae</taxon>
        <taxon>Maleae</taxon>
        <taxon>Malus</taxon>
    </lineage>
</organism>
<dbReference type="EC" id="2.4.1.-" evidence="4"/>
<dbReference type="EMBL" id="DQ103712">
    <property type="protein sequence ID" value="AAZ80472.1"/>
    <property type="molecule type" value="mRNA"/>
</dbReference>
<dbReference type="RefSeq" id="NP_001315903.1">
    <property type="nucleotide sequence ID" value="NM_001328974.1"/>
</dbReference>
<dbReference type="SMR" id="D3THI6"/>
<dbReference type="CAZy" id="GT1">
    <property type="family name" value="Glycosyltransferase Family 1"/>
</dbReference>
<dbReference type="GeneID" id="103441425"/>
<dbReference type="KEGG" id="mdm:103441425"/>
<dbReference type="OrthoDB" id="5835829at2759"/>
<dbReference type="GO" id="GO:0035251">
    <property type="term" value="F:UDP-glucosyltransferase activity"/>
    <property type="evidence" value="ECO:0000314"/>
    <property type="project" value="UniProtKB"/>
</dbReference>
<dbReference type="CDD" id="cd03784">
    <property type="entry name" value="GT1_Gtf-like"/>
    <property type="match status" value="1"/>
</dbReference>
<dbReference type="FunFam" id="3.40.50.2000:FF:000056">
    <property type="entry name" value="Glycosyltransferase"/>
    <property type="match status" value="1"/>
</dbReference>
<dbReference type="FunFam" id="3.40.50.2000:FF:000080">
    <property type="entry name" value="Glycosyltransferase"/>
    <property type="match status" value="1"/>
</dbReference>
<dbReference type="Gene3D" id="3.40.50.2000">
    <property type="entry name" value="Glycogen Phosphorylase B"/>
    <property type="match status" value="2"/>
</dbReference>
<dbReference type="InterPro" id="IPR050481">
    <property type="entry name" value="UDP-glycosyltransf_plant"/>
</dbReference>
<dbReference type="InterPro" id="IPR002213">
    <property type="entry name" value="UDP_glucos_trans"/>
</dbReference>
<dbReference type="InterPro" id="IPR035595">
    <property type="entry name" value="UDP_glycos_trans_CS"/>
</dbReference>
<dbReference type="PANTHER" id="PTHR48048">
    <property type="entry name" value="GLYCOSYLTRANSFERASE"/>
    <property type="match status" value="1"/>
</dbReference>
<dbReference type="PANTHER" id="PTHR48048:SF45">
    <property type="entry name" value="GLYCOSYLTRANSFERASE"/>
    <property type="match status" value="1"/>
</dbReference>
<dbReference type="Pfam" id="PF00201">
    <property type="entry name" value="UDPGT"/>
    <property type="match status" value="1"/>
</dbReference>
<dbReference type="SUPFAM" id="SSF53756">
    <property type="entry name" value="UDP-Glycosyltransferase/glycogen phosphorylase"/>
    <property type="match status" value="1"/>
</dbReference>
<dbReference type="PROSITE" id="PS00375">
    <property type="entry name" value="UDPGT"/>
    <property type="match status" value="1"/>
</dbReference>
<name>U7A15_MALDO</name>
<comment type="function">
    <text evidence="2">Glycosyltransferase that possesses chalcone and flavonol 2'-O-glycosyltransferase activity. Converts phloretin to phlorizin (phloretin 2'-O-glucoside), a potent antioxidant. Possesses glycosyltransferase activity toward, naringenin, naringenin chalcone, eriodictyol, eriodictyol chalcone, apigenin, luteolin, kaempferol, quercetin, isoliquiritigenin, butein and caffeic acid. Can convert phloretin to phloretin 4'-O-glucoside and phloretin 4-O-glucoside.</text>
</comment>
<comment type="biophysicochemical properties">
    <phDependence>
        <text evidence="2">Optimum pH is 6.75.</text>
    </phDependence>
    <temperatureDependence>
        <text evidence="2">Optimum temperature is 30 degrees Celsius.</text>
    </temperatureDependence>
</comment>
<comment type="similarity">
    <text evidence="4">Belongs to the UDP-glycosyltransferase family.</text>
</comment>
<keyword id="KW-0328">Glycosyltransferase</keyword>
<keyword id="KW-0808">Transferase</keyword>
<reference key="1">
    <citation type="journal article" date="2010" name="Plant Sci.">
        <title>Cloning and heterologous expression of glycosyltransferases from Malus x domestica and Pyrus communis, which convert phloretin to phloretin 2'-O-glucoside (phloridzin).</title>
        <authorList>
            <person name="Gosch C."/>
            <person name="Halbwirth H."/>
            <person name="Schneider B."/>
            <person name="Holscher D."/>
            <person name="Stich K."/>
        </authorList>
    </citation>
    <scope>NUCLEOTIDE SEQUENCE [MRNA]</scope>
    <scope>FUNCTION</scope>
    <scope>BIOPHYSICOCHEMICAL PROPERTIES</scope>
    <source>
        <strain>cv. Rebella</strain>
    </source>
</reference>
<evidence type="ECO:0000250" key="1">
    <source>
        <dbReference type="UniProtKB" id="Q9M156"/>
    </source>
</evidence>
<evidence type="ECO:0000269" key="2">
    <source ref="1"/>
</evidence>
<evidence type="ECO:0000303" key="3">
    <source ref="1"/>
</evidence>
<evidence type="ECO:0000305" key="4"/>
<accession>D3THI6</accession>
<protein>
    <recommendedName>
        <fullName evidence="3">UDP-glycosyltransferase 71A15</fullName>
        <ecNumber evidence="4">2.4.1.-</ecNumber>
    </recommendedName>
    <alternativeName>
        <fullName evidence="4">UDP-glucose:chalcone 2'-O-glucosyltransferase</fullName>
    </alternativeName>
    <alternativeName>
        <fullName evidence="4">UDP-glucose:flavonol 2'-O-glucosyltransferase</fullName>
    </alternativeName>
</protein>